<feature type="chain" id="PRO_0000145715" description="Glyceraldehyde-3-phosphate dehydrogenase">
    <location>
        <begin position="1"/>
        <end position="343"/>
    </location>
</feature>
<feature type="active site" description="Nucleophile" evidence="1">
    <location>
        <position position="142"/>
    </location>
</feature>
<feature type="binding site" evidence="1">
    <location>
        <begin position="13"/>
        <end position="14"/>
    </location>
    <ligand>
        <name>NAD(+)</name>
        <dbReference type="ChEBI" id="CHEBI:57540"/>
    </ligand>
</feature>
<feature type="binding site" evidence="1">
    <location>
        <position position="112"/>
    </location>
    <ligand>
        <name>NAD(+)</name>
        <dbReference type="ChEBI" id="CHEBI:57540"/>
    </ligand>
</feature>
<feature type="binding site" evidence="1">
    <location>
        <begin position="141"/>
        <end position="143"/>
    </location>
    <ligand>
        <name>D-glyceraldehyde 3-phosphate</name>
        <dbReference type="ChEBI" id="CHEBI:59776"/>
    </ligand>
</feature>
<feature type="binding site" evidence="1">
    <location>
        <position position="170"/>
    </location>
    <ligand>
        <name>NAD(+)</name>
        <dbReference type="ChEBI" id="CHEBI:57540"/>
    </ligand>
</feature>
<feature type="binding site" evidence="1">
    <location>
        <begin position="196"/>
        <end position="197"/>
    </location>
    <ligand>
        <name>D-glyceraldehyde 3-phosphate</name>
        <dbReference type="ChEBI" id="CHEBI:59776"/>
    </ligand>
</feature>
<feature type="binding site" evidence="1">
    <location>
        <position position="303"/>
    </location>
    <ligand>
        <name>NAD(+)</name>
        <dbReference type="ChEBI" id="CHEBI:57540"/>
    </ligand>
</feature>
<keyword id="KW-0963">Cytoplasm</keyword>
<keyword id="KW-0324">Glycolysis</keyword>
<keyword id="KW-0520">NAD</keyword>
<keyword id="KW-0521">NADP</keyword>
<keyword id="KW-0560">Oxidoreductase</keyword>
<keyword id="KW-1185">Reference proteome</keyword>
<gene>
    <name type="primary">gap</name>
    <name type="ordered locus">APE_0171.1</name>
</gene>
<evidence type="ECO:0000250" key="1"/>
<evidence type="ECO:0000305" key="2"/>
<sequence>MSVVKVGVNGFGTIGRRVALAITLQKDMKLVGVVKRTPDYAALYAASRGIPIYTPTAKEAEEFEKRGIKVGGTLRELLARVDVVVDATPEGQGAKNKPLYREAGVKQVYQGGEKPEVAEASFSTLCNYEESKGRGSLRVVSCNTTGLLRLICTLNREFGVESVRAVLVRRGADPKEVKKGPIDSIVLNPPTLPSHHAVDVRTVLPWLDIKTAAVAVPTTFMHMHHVTLKLAKPVEKREVLETLASAPRIMLVSSGDTGIKSTSQLVDAARLSRMGYDIPELVVFEESVAVDGREVMLFQAVHQESIVVPENIDAIRAVASSPLTLDETLKATDGSLGLRKTLW</sequence>
<organism>
    <name type="scientific">Aeropyrum pernix (strain ATCC 700893 / DSM 11879 / JCM 9820 / NBRC 100138 / K1)</name>
    <dbReference type="NCBI Taxonomy" id="272557"/>
    <lineage>
        <taxon>Archaea</taxon>
        <taxon>Thermoproteota</taxon>
        <taxon>Thermoprotei</taxon>
        <taxon>Desulfurococcales</taxon>
        <taxon>Desulfurococcaceae</taxon>
        <taxon>Aeropyrum</taxon>
    </lineage>
</organism>
<proteinExistence type="inferred from homology"/>
<reference key="1">
    <citation type="journal article" date="1999" name="DNA Res.">
        <title>Complete genome sequence of an aerobic hyper-thermophilic crenarchaeon, Aeropyrum pernix K1.</title>
        <authorList>
            <person name="Kawarabayasi Y."/>
            <person name="Hino Y."/>
            <person name="Horikawa H."/>
            <person name="Yamazaki S."/>
            <person name="Haikawa Y."/>
            <person name="Jin-no K."/>
            <person name="Takahashi M."/>
            <person name="Sekine M."/>
            <person name="Baba S."/>
            <person name="Ankai A."/>
            <person name="Kosugi H."/>
            <person name="Hosoyama A."/>
            <person name="Fukui S."/>
            <person name="Nagai Y."/>
            <person name="Nishijima K."/>
            <person name="Nakazawa H."/>
            <person name="Takamiya M."/>
            <person name="Masuda S."/>
            <person name="Funahashi T."/>
            <person name="Tanaka T."/>
            <person name="Kudoh Y."/>
            <person name="Yamazaki J."/>
            <person name="Kushida N."/>
            <person name="Oguchi A."/>
            <person name="Aoki K."/>
            <person name="Kubota K."/>
            <person name="Nakamura Y."/>
            <person name="Nomura N."/>
            <person name="Sako Y."/>
            <person name="Kikuchi H."/>
        </authorList>
    </citation>
    <scope>NUCLEOTIDE SEQUENCE [LARGE SCALE GENOMIC DNA]</scope>
    <source>
        <strain>ATCC 700893 / DSM 11879 / JCM 9820 / NBRC 100138 / K1</strain>
    </source>
</reference>
<comment type="catalytic activity">
    <reaction>
        <text>D-glyceraldehyde 3-phosphate + phosphate + NADP(+) = (2R)-3-phospho-glyceroyl phosphate + NADPH + H(+)</text>
        <dbReference type="Rhea" id="RHEA:10296"/>
        <dbReference type="ChEBI" id="CHEBI:15378"/>
        <dbReference type="ChEBI" id="CHEBI:43474"/>
        <dbReference type="ChEBI" id="CHEBI:57604"/>
        <dbReference type="ChEBI" id="CHEBI:57783"/>
        <dbReference type="ChEBI" id="CHEBI:58349"/>
        <dbReference type="ChEBI" id="CHEBI:59776"/>
        <dbReference type="EC" id="1.2.1.59"/>
    </reaction>
</comment>
<comment type="catalytic activity">
    <reaction>
        <text>D-glyceraldehyde 3-phosphate + phosphate + NAD(+) = (2R)-3-phospho-glyceroyl phosphate + NADH + H(+)</text>
        <dbReference type="Rhea" id="RHEA:10300"/>
        <dbReference type="ChEBI" id="CHEBI:15378"/>
        <dbReference type="ChEBI" id="CHEBI:43474"/>
        <dbReference type="ChEBI" id="CHEBI:57540"/>
        <dbReference type="ChEBI" id="CHEBI:57604"/>
        <dbReference type="ChEBI" id="CHEBI:57945"/>
        <dbReference type="ChEBI" id="CHEBI:59776"/>
        <dbReference type="EC" id="1.2.1.59"/>
    </reaction>
</comment>
<comment type="pathway">
    <text>Carbohydrate degradation; glycolysis; pyruvate from D-glyceraldehyde 3-phosphate: step 1/5.</text>
</comment>
<comment type="subunit">
    <text evidence="1">Homotetramer.</text>
</comment>
<comment type="subcellular location">
    <subcellularLocation>
        <location evidence="1">Cytoplasm</location>
    </subcellularLocation>
</comment>
<comment type="similarity">
    <text evidence="2">Belongs to the glyceraldehyde-3-phosphate dehydrogenase family.</text>
</comment>
<name>G3P_AERPE</name>
<accession>Q9YFS9</accession>
<protein>
    <recommendedName>
        <fullName>Glyceraldehyde-3-phosphate dehydrogenase</fullName>
        <shortName>GAPDH</shortName>
        <ecNumber>1.2.1.59</ecNumber>
    </recommendedName>
    <alternativeName>
        <fullName>NAD(P)-dependent glyceraldehyde-3-phosphate dehydrogenase</fullName>
    </alternativeName>
</protein>
<dbReference type="EC" id="1.2.1.59"/>
<dbReference type="EMBL" id="BA000002">
    <property type="protein sequence ID" value="BAA79082.2"/>
    <property type="molecule type" value="Genomic_DNA"/>
</dbReference>
<dbReference type="PIR" id="H72772">
    <property type="entry name" value="H72772"/>
</dbReference>
<dbReference type="RefSeq" id="WP_010865544.1">
    <property type="nucleotide sequence ID" value="NC_000854.2"/>
</dbReference>
<dbReference type="SMR" id="Q9YFS9"/>
<dbReference type="STRING" id="272557.APE_0171.1"/>
<dbReference type="EnsemblBacteria" id="BAA79082">
    <property type="protein sequence ID" value="BAA79082"/>
    <property type="gene ID" value="APE_0171.1"/>
</dbReference>
<dbReference type="GeneID" id="1445701"/>
<dbReference type="KEGG" id="ape:APE_0171.1"/>
<dbReference type="PATRIC" id="fig|272557.25.peg.122"/>
<dbReference type="eggNOG" id="arCOG00493">
    <property type="taxonomic scope" value="Archaea"/>
</dbReference>
<dbReference type="UniPathway" id="UPA00109">
    <property type="reaction ID" value="UER00184"/>
</dbReference>
<dbReference type="Proteomes" id="UP000002518">
    <property type="component" value="Chromosome"/>
</dbReference>
<dbReference type="GO" id="GO:0005737">
    <property type="term" value="C:cytoplasm"/>
    <property type="evidence" value="ECO:0007669"/>
    <property type="project" value="UniProtKB-SubCell"/>
</dbReference>
<dbReference type="GO" id="GO:0008839">
    <property type="term" value="F:4-hydroxy-tetrahydrodipicolinate reductase"/>
    <property type="evidence" value="ECO:0007669"/>
    <property type="project" value="InterPro"/>
</dbReference>
<dbReference type="GO" id="GO:0004365">
    <property type="term" value="F:glyceraldehyde-3-phosphate dehydrogenase (NAD+) (phosphorylating) activity"/>
    <property type="evidence" value="ECO:0007669"/>
    <property type="project" value="UniProtKB-UniRule"/>
</dbReference>
<dbReference type="GO" id="GO:0047100">
    <property type="term" value="F:glyceraldehyde-3-phosphate dehydrogenase (NADP+) (phosphorylating) activity"/>
    <property type="evidence" value="ECO:0007669"/>
    <property type="project" value="RHEA"/>
</dbReference>
<dbReference type="GO" id="GO:0051287">
    <property type="term" value="F:NAD binding"/>
    <property type="evidence" value="ECO:0007669"/>
    <property type="project" value="InterPro"/>
</dbReference>
<dbReference type="GO" id="GO:0050661">
    <property type="term" value="F:NADP binding"/>
    <property type="evidence" value="ECO:0007669"/>
    <property type="project" value="InterPro"/>
</dbReference>
<dbReference type="GO" id="GO:0006096">
    <property type="term" value="P:glycolytic process"/>
    <property type="evidence" value="ECO:0007669"/>
    <property type="project" value="UniProtKB-UniRule"/>
</dbReference>
<dbReference type="GO" id="GO:0009089">
    <property type="term" value="P:lysine biosynthetic process via diaminopimelate"/>
    <property type="evidence" value="ECO:0007669"/>
    <property type="project" value="InterPro"/>
</dbReference>
<dbReference type="CDD" id="cd18127">
    <property type="entry name" value="GAPDH_II_C"/>
    <property type="match status" value="1"/>
</dbReference>
<dbReference type="CDD" id="cd02278">
    <property type="entry name" value="GAPDH_II_N"/>
    <property type="match status" value="1"/>
</dbReference>
<dbReference type="Gene3D" id="3.30.360.10">
    <property type="entry name" value="Dihydrodipicolinate Reductase, domain 2"/>
    <property type="match status" value="1"/>
</dbReference>
<dbReference type="Gene3D" id="3.40.50.720">
    <property type="entry name" value="NAD(P)-binding Rossmann-like Domain"/>
    <property type="match status" value="1"/>
</dbReference>
<dbReference type="HAMAP" id="MF_00559">
    <property type="entry name" value="G3P_dehdrog_arch"/>
    <property type="match status" value="1"/>
</dbReference>
<dbReference type="InterPro" id="IPR000846">
    <property type="entry name" value="DapB_N"/>
</dbReference>
<dbReference type="InterPro" id="IPR020831">
    <property type="entry name" value="GlycerAld/Erythrose_P_DH"/>
</dbReference>
<dbReference type="InterPro" id="IPR020830">
    <property type="entry name" value="GlycerAld_3-P_DH_AS"/>
</dbReference>
<dbReference type="InterPro" id="IPR020829">
    <property type="entry name" value="GlycerAld_3-P_DH_cat"/>
</dbReference>
<dbReference type="InterPro" id="IPR020828">
    <property type="entry name" value="GlycerAld_3-P_DH_NAD(P)-bd"/>
</dbReference>
<dbReference type="InterPro" id="IPR006436">
    <property type="entry name" value="Glyceraldehyde-3-P_DH_2_arc"/>
</dbReference>
<dbReference type="InterPro" id="IPR036291">
    <property type="entry name" value="NAD(P)-bd_dom_sf"/>
</dbReference>
<dbReference type="NCBIfam" id="TIGR01546">
    <property type="entry name" value="GAPDH-II_archae"/>
    <property type="match status" value="1"/>
</dbReference>
<dbReference type="NCBIfam" id="NF003251">
    <property type="entry name" value="PRK04207.1"/>
    <property type="match status" value="1"/>
</dbReference>
<dbReference type="Pfam" id="PF01113">
    <property type="entry name" value="DapB_N"/>
    <property type="match status" value="1"/>
</dbReference>
<dbReference type="Pfam" id="PF02800">
    <property type="entry name" value="Gp_dh_C"/>
    <property type="match status" value="1"/>
</dbReference>
<dbReference type="PIRSF" id="PIRSF000149">
    <property type="entry name" value="GAP_DH"/>
    <property type="match status" value="1"/>
</dbReference>
<dbReference type="SMART" id="SM00846">
    <property type="entry name" value="Gp_dh_N"/>
    <property type="match status" value="1"/>
</dbReference>
<dbReference type="SUPFAM" id="SSF55347">
    <property type="entry name" value="Glyceraldehyde-3-phosphate dehydrogenase-like, C-terminal domain"/>
    <property type="match status" value="1"/>
</dbReference>
<dbReference type="SUPFAM" id="SSF51735">
    <property type="entry name" value="NAD(P)-binding Rossmann-fold domains"/>
    <property type="match status" value="1"/>
</dbReference>
<dbReference type="PROSITE" id="PS00071">
    <property type="entry name" value="GAPDH"/>
    <property type="match status" value="1"/>
</dbReference>